<accession>A1WSU4</accession>
<keyword id="KW-1185">Reference proteome</keyword>
<keyword id="KW-0687">Ribonucleoprotein</keyword>
<keyword id="KW-0689">Ribosomal protein</keyword>
<reference key="1">
    <citation type="submission" date="2006-12" db="EMBL/GenBank/DDBJ databases">
        <title>Complete sequence of chromosome 1 of Verminephrobacter eiseniae EF01-2.</title>
        <authorList>
            <person name="Copeland A."/>
            <person name="Lucas S."/>
            <person name="Lapidus A."/>
            <person name="Barry K."/>
            <person name="Detter J.C."/>
            <person name="Glavina del Rio T."/>
            <person name="Dalin E."/>
            <person name="Tice H."/>
            <person name="Pitluck S."/>
            <person name="Chertkov O."/>
            <person name="Brettin T."/>
            <person name="Bruce D."/>
            <person name="Han C."/>
            <person name="Tapia R."/>
            <person name="Gilna P."/>
            <person name="Schmutz J."/>
            <person name="Larimer F."/>
            <person name="Land M."/>
            <person name="Hauser L."/>
            <person name="Kyrpides N."/>
            <person name="Kim E."/>
            <person name="Stahl D."/>
            <person name="Richardson P."/>
        </authorList>
    </citation>
    <scope>NUCLEOTIDE SEQUENCE [LARGE SCALE GENOMIC DNA]</scope>
    <source>
        <strain>EF01-2</strain>
    </source>
</reference>
<gene>
    <name evidence="1" type="primary">rpmH</name>
    <name type="ordered locus">Veis_5015</name>
</gene>
<dbReference type="EMBL" id="CP000542">
    <property type="protein sequence ID" value="ABM60701.1"/>
    <property type="molecule type" value="Genomic_DNA"/>
</dbReference>
<dbReference type="RefSeq" id="WP_005798102.1">
    <property type="nucleotide sequence ID" value="NC_008786.1"/>
</dbReference>
<dbReference type="SMR" id="A1WSU4"/>
<dbReference type="STRING" id="391735.Veis_5015"/>
<dbReference type="GeneID" id="84683486"/>
<dbReference type="KEGG" id="vei:Veis_5015"/>
<dbReference type="eggNOG" id="COG0230">
    <property type="taxonomic scope" value="Bacteria"/>
</dbReference>
<dbReference type="HOGENOM" id="CLU_129938_2_0_4"/>
<dbReference type="OrthoDB" id="9804164at2"/>
<dbReference type="Proteomes" id="UP000000374">
    <property type="component" value="Chromosome"/>
</dbReference>
<dbReference type="GO" id="GO:1990904">
    <property type="term" value="C:ribonucleoprotein complex"/>
    <property type="evidence" value="ECO:0007669"/>
    <property type="project" value="UniProtKB-KW"/>
</dbReference>
<dbReference type="GO" id="GO:0005840">
    <property type="term" value="C:ribosome"/>
    <property type="evidence" value="ECO:0007669"/>
    <property type="project" value="UniProtKB-KW"/>
</dbReference>
<dbReference type="GO" id="GO:0003735">
    <property type="term" value="F:structural constituent of ribosome"/>
    <property type="evidence" value="ECO:0007669"/>
    <property type="project" value="InterPro"/>
</dbReference>
<dbReference type="GO" id="GO:0006412">
    <property type="term" value="P:translation"/>
    <property type="evidence" value="ECO:0007669"/>
    <property type="project" value="UniProtKB-UniRule"/>
</dbReference>
<dbReference type="FunFam" id="1.10.287.3980:FF:000001">
    <property type="entry name" value="Mitochondrial ribosomal protein L34"/>
    <property type="match status" value="1"/>
</dbReference>
<dbReference type="Gene3D" id="1.10.287.3980">
    <property type="match status" value="1"/>
</dbReference>
<dbReference type="HAMAP" id="MF_00391">
    <property type="entry name" value="Ribosomal_bL34"/>
    <property type="match status" value="1"/>
</dbReference>
<dbReference type="InterPro" id="IPR000271">
    <property type="entry name" value="Ribosomal_bL34"/>
</dbReference>
<dbReference type="InterPro" id="IPR020939">
    <property type="entry name" value="Ribosomal_bL34_CS"/>
</dbReference>
<dbReference type="NCBIfam" id="TIGR01030">
    <property type="entry name" value="rpmH_bact"/>
    <property type="match status" value="1"/>
</dbReference>
<dbReference type="PANTHER" id="PTHR14503:SF4">
    <property type="entry name" value="LARGE RIBOSOMAL SUBUNIT PROTEIN BL34M"/>
    <property type="match status" value="1"/>
</dbReference>
<dbReference type="PANTHER" id="PTHR14503">
    <property type="entry name" value="MITOCHONDRIAL RIBOSOMAL PROTEIN 34 FAMILY MEMBER"/>
    <property type="match status" value="1"/>
</dbReference>
<dbReference type="Pfam" id="PF00468">
    <property type="entry name" value="Ribosomal_L34"/>
    <property type="match status" value="1"/>
</dbReference>
<dbReference type="PROSITE" id="PS00784">
    <property type="entry name" value="RIBOSOMAL_L34"/>
    <property type="match status" value="1"/>
</dbReference>
<proteinExistence type="inferred from homology"/>
<organism>
    <name type="scientific">Verminephrobacter eiseniae (strain EF01-2)</name>
    <dbReference type="NCBI Taxonomy" id="391735"/>
    <lineage>
        <taxon>Bacteria</taxon>
        <taxon>Pseudomonadati</taxon>
        <taxon>Pseudomonadota</taxon>
        <taxon>Betaproteobacteria</taxon>
        <taxon>Burkholderiales</taxon>
        <taxon>Comamonadaceae</taxon>
        <taxon>Verminephrobacter</taxon>
    </lineage>
</organism>
<comment type="similarity">
    <text evidence="1">Belongs to the bacterial ribosomal protein bL34 family.</text>
</comment>
<evidence type="ECO:0000255" key="1">
    <source>
        <dbReference type="HAMAP-Rule" id="MF_00391"/>
    </source>
</evidence>
<evidence type="ECO:0000305" key="2"/>
<sequence length="44" mass="5138">MKRTYQPSKTRRARTHGFLVRMKTRGGRAVINARRAKGRKRLAV</sequence>
<feature type="chain" id="PRO_1000013489" description="Large ribosomal subunit protein bL34">
    <location>
        <begin position="1"/>
        <end position="44"/>
    </location>
</feature>
<name>RL34_VEREI</name>
<protein>
    <recommendedName>
        <fullName evidence="1">Large ribosomal subunit protein bL34</fullName>
    </recommendedName>
    <alternativeName>
        <fullName evidence="2">50S ribosomal protein L34</fullName>
    </alternativeName>
</protein>